<feature type="chain" id="PRO_0000163781" description="Ribonuclease Y">
    <location>
        <begin position="1" status="less than"/>
        <end position="422"/>
    </location>
</feature>
<feature type="domain" description="KH" evidence="1">
    <location>
        <begin position="112"/>
        <end position="172"/>
    </location>
</feature>
<feature type="domain" description="HD" evidence="2">
    <location>
        <begin position="238"/>
        <end position="331"/>
    </location>
</feature>
<feature type="non-terminal residue">
    <location>
        <position position="1"/>
    </location>
</feature>
<protein>
    <recommendedName>
        <fullName evidence="1">Ribonuclease Y</fullName>
        <shortName evidence="1">RNase Y</shortName>
        <ecNumber evidence="1">3.1.-.-</ecNumber>
    </recommendedName>
</protein>
<name>RNY_MYCMY</name>
<proteinExistence type="inferred from homology"/>
<sequence>DLRANDLKRSQEIVESKSQRLDAGILDLEKRKFLVDQKEEYLIKLLEDVSGLTKYQAKELLIKQIKNKSEKELISILKNAELQAHSKAKIISNNILILAMERIKVELTSQRTTNIVKLPSDDLKGRIIGKDGRNMKTFEQIGGVDIVVDETPNVVVVSSFNPIRREIATRTLEQLIIDGRIQPVKIENELKKQEQELEYIIQETGLNTIKELNINDIDIELVKLIGKLKFRTSYGQNVLAHSIEVAKLSGAIASELGLDVEKAIRAGLLHDIGKAIDFEKQGSHVVLGAEIARKYNEDPIIINSIESHHEDKEKSSEIAAIVAIADSISASRPGARYNAIDEFILRMHEIEKIGNSIPGVAKTYALQSGRQIRLIVDPLVASDLDLALILEKMKEQIKNKVIIPGEITITVIREKKETDILK</sequence>
<accession>Q01444</accession>
<comment type="function">
    <text evidence="1">Endoribonuclease that initiates mRNA decay.</text>
</comment>
<comment type="similarity">
    <text evidence="1">Belongs to the RNase Y family.</text>
</comment>
<keyword id="KW-0255">Endonuclease</keyword>
<keyword id="KW-0378">Hydrolase</keyword>
<keyword id="KW-0540">Nuclease</keyword>
<keyword id="KW-0694">RNA-binding</keyword>
<evidence type="ECO:0000255" key="1">
    <source>
        <dbReference type="HAMAP-Rule" id="MF_00335"/>
    </source>
</evidence>
<evidence type="ECO:0000255" key="2">
    <source>
        <dbReference type="PROSITE-ProRule" id="PRU01175"/>
    </source>
</evidence>
<dbReference type="EC" id="3.1.-.-" evidence="1"/>
<dbReference type="EMBL" id="M91593">
    <property type="protein sequence ID" value="AAA25440.1"/>
    <property type="molecule type" value="Genomic_DNA"/>
</dbReference>
<dbReference type="PIR" id="S35480">
    <property type="entry name" value="S35480"/>
</dbReference>
<dbReference type="SMR" id="Q01444"/>
<dbReference type="GO" id="GO:0016020">
    <property type="term" value="C:membrane"/>
    <property type="evidence" value="ECO:0007669"/>
    <property type="project" value="InterPro"/>
</dbReference>
<dbReference type="GO" id="GO:0004519">
    <property type="term" value="F:endonuclease activity"/>
    <property type="evidence" value="ECO:0007669"/>
    <property type="project" value="UniProtKB-KW"/>
</dbReference>
<dbReference type="GO" id="GO:0003723">
    <property type="term" value="F:RNA binding"/>
    <property type="evidence" value="ECO:0007669"/>
    <property type="project" value="UniProtKB-KW"/>
</dbReference>
<dbReference type="GO" id="GO:0006402">
    <property type="term" value="P:mRNA catabolic process"/>
    <property type="evidence" value="ECO:0007669"/>
    <property type="project" value="InterPro"/>
</dbReference>
<dbReference type="CDD" id="cd00077">
    <property type="entry name" value="HDc"/>
    <property type="match status" value="1"/>
</dbReference>
<dbReference type="CDD" id="cd22431">
    <property type="entry name" value="KH-I_RNaseY"/>
    <property type="match status" value="1"/>
</dbReference>
<dbReference type="Gene3D" id="1.10.3210.10">
    <property type="entry name" value="Hypothetical protein af1432"/>
    <property type="match status" value="1"/>
</dbReference>
<dbReference type="Gene3D" id="3.30.1370.10">
    <property type="entry name" value="K Homology domain, type 1"/>
    <property type="match status" value="1"/>
</dbReference>
<dbReference type="HAMAP" id="MF_00335">
    <property type="entry name" value="RNase_Y"/>
    <property type="match status" value="1"/>
</dbReference>
<dbReference type="InterPro" id="IPR051094">
    <property type="entry name" value="Diverse_Catalytic_Enzymes"/>
</dbReference>
<dbReference type="InterPro" id="IPR003607">
    <property type="entry name" value="HD/PDEase_dom"/>
</dbReference>
<dbReference type="InterPro" id="IPR006674">
    <property type="entry name" value="HD_domain"/>
</dbReference>
<dbReference type="InterPro" id="IPR006675">
    <property type="entry name" value="HDIG_dom"/>
</dbReference>
<dbReference type="InterPro" id="IPR004087">
    <property type="entry name" value="KH_dom"/>
</dbReference>
<dbReference type="InterPro" id="IPR004088">
    <property type="entry name" value="KH_dom_type_1"/>
</dbReference>
<dbReference type="InterPro" id="IPR036612">
    <property type="entry name" value="KH_dom_type_1_sf"/>
</dbReference>
<dbReference type="InterPro" id="IPR017705">
    <property type="entry name" value="Ribonuclease_Y"/>
</dbReference>
<dbReference type="InterPro" id="IPR022711">
    <property type="entry name" value="RNase_Y_N"/>
</dbReference>
<dbReference type="NCBIfam" id="TIGR00277">
    <property type="entry name" value="HDIG"/>
    <property type="match status" value="1"/>
</dbReference>
<dbReference type="NCBIfam" id="TIGR03319">
    <property type="entry name" value="RNase_Y"/>
    <property type="match status" value="1"/>
</dbReference>
<dbReference type="PANTHER" id="PTHR35795:SF1">
    <property type="entry name" value="BIS(5'-NUCLEOSYL)-TETRAPHOSPHATASE, SYMMETRICAL"/>
    <property type="match status" value="1"/>
</dbReference>
<dbReference type="PANTHER" id="PTHR35795">
    <property type="entry name" value="SLR1885 PROTEIN"/>
    <property type="match status" value="1"/>
</dbReference>
<dbReference type="Pfam" id="PF01966">
    <property type="entry name" value="HD"/>
    <property type="match status" value="1"/>
</dbReference>
<dbReference type="Pfam" id="PF00013">
    <property type="entry name" value="KH_1"/>
    <property type="match status" value="1"/>
</dbReference>
<dbReference type="Pfam" id="PF12072">
    <property type="entry name" value="RNase_Y_N"/>
    <property type="match status" value="1"/>
</dbReference>
<dbReference type="SMART" id="SM00471">
    <property type="entry name" value="HDc"/>
    <property type="match status" value="1"/>
</dbReference>
<dbReference type="SMART" id="SM00322">
    <property type="entry name" value="KH"/>
    <property type="match status" value="1"/>
</dbReference>
<dbReference type="SUPFAM" id="SSF54791">
    <property type="entry name" value="Eukaryotic type KH-domain (KH-domain type I)"/>
    <property type="match status" value="1"/>
</dbReference>
<dbReference type="SUPFAM" id="SSF109604">
    <property type="entry name" value="HD-domain/PDEase-like"/>
    <property type="match status" value="1"/>
</dbReference>
<dbReference type="PROSITE" id="PS51831">
    <property type="entry name" value="HD"/>
    <property type="match status" value="1"/>
</dbReference>
<gene>
    <name evidence="1" type="primary">rny</name>
</gene>
<organism>
    <name type="scientific">Mycoplasma mycoides</name>
    <dbReference type="NCBI Taxonomy" id="2102"/>
    <lineage>
        <taxon>Bacteria</taxon>
        <taxon>Bacillati</taxon>
        <taxon>Mycoplasmatota</taxon>
        <taxon>Mollicutes</taxon>
        <taxon>Mycoplasmataceae</taxon>
        <taxon>Mycoplasma</taxon>
    </lineage>
</organism>
<reference key="1">
    <citation type="journal article" date="1992" name="Nucleic Acids Res.">
        <title>A Mycoplasma protein homologous to mammalian SRP54 recognizes a highly conserved domain of SRP RNA.</title>
        <authorList>
            <person name="Samuelsson T.B."/>
        </authorList>
    </citation>
    <scope>NUCLEOTIDE SEQUENCE [GENOMIC DNA]</scope>
</reference>